<protein>
    <recommendedName>
        <fullName evidence="1">Large ribosomal subunit protein bL20</fullName>
    </recommendedName>
    <alternativeName>
        <fullName evidence="2">50S ribosomal protein L20</fullName>
    </alternativeName>
</protein>
<gene>
    <name evidence="1" type="primary">rplT</name>
    <name type="ordered locus">MMOB6270</name>
</gene>
<evidence type="ECO:0000255" key="1">
    <source>
        <dbReference type="HAMAP-Rule" id="MF_00382"/>
    </source>
</evidence>
<evidence type="ECO:0000305" key="2"/>
<dbReference type="EMBL" id="AE017308">
    <property type="protein sequence ID" value="AAT28113.1"/>
    <property type="molecule type" value="Genomic_DNA"/>
</dbReference>
<dbReference type="RefSeq" id="WP_011265147.1">
    <property type="nucleotide sequence ID" value="NC_006908.1"/>
</dbReference>
<dbReference type="SMR" id="Q6KH18"/>
<dbReference type="STRING" id="267748.MMOB6270"/>
<dbReference type="KEGG" id="mmo:MMOB6270"/>
<dbReference type="eggNOG" id="COG0292">
    <property type="taxonomic scope" value="Bacteria"/>
</dbReference>
<dbReference type="HOGENOM" id="CLU_123265_0_1_14"/>
<dbReference type="OrthoDB" id="9808966at2"/>
<dbReference type="Proteomes" id="UP000009072">
    <property type="component" value="Chromosome"/>
</dbReference>
<dbReference type="GO" id="GO:1990904">
    <property type="term" value="C:ribonucleoprotein complex"/>
    <property type="evidence" value="ECO:0007669"/>
    <property type="project" value="UniProtKB-KW"/>
</dbReference>
<dbReference type="GO" id="GO:0005840">
    <property type="term" value="C:ribosome"/>
    <property type="evidence" value="ECO:0007669"/>
    <property type="project" value="UniProtKB-KW"/>
</dbReference>
<dbReference type="GO" id="GO:0019843">
    <property type="term" value="F:rRNA binding"/>
    <property type="evidence" value="ECO:0007669"/>
    <property type="project" value="UniProtKB-UniRule"/>
</dbReference>
<dbReference type="GO" id="GO:0003735">
    <property type="term" value="F:structural constituent of ribosome"/>
    <property type="evidence" value="ECO:0007669"/>
    <property type="project" value="InterPro"/>
</dbReference>
<dbReference type="GO" id="GO:0000027">
    <property type="term" value="P:ribosomal large subunit assembly"/>
    <property type="evidence" value="ECO:0007669"/>
    <property type="project" value="UniProtKB-UniRule"/>
</dbReference>
<dbReference type="GO" id="GO:0006412">
    <property type="term" value="P:translation"/>
    <property type="evidence" value="ECO:0007669"/>
    <property type="project" value="InterPro"/>
</dbReference>
<dbReference type="CDD" id="cd07026">
    <property type="entry name" value="Ribosomal_L20"/>
    <property type="match status" value="1"/>
</dbReference>
<dbReference type="FunFam" id="1.10.1900.20:FF:000001">
    <property type="entry name" value="50S ribosomal protein L20"/>
    <property type="match status" value="1"/>
</dbReference>
<dbReference type="Gene3D" id="6.10.160.10">
    <property type="match status" value="1"/>
</dbReference>
<dbReference type="Gene3D" id="1.10.1900.20">
    <property type="entry name" value="Ribosomal protein L20"/>
    <property type="match status" value="1"/>
</dbReference>
<dbReference type="HAMAP" id="MF_00382">
    <property type="entry name" value="Ribosomal_bL20"/>
    <property type="match status" value="1"/>
</dbReference>
<dbReference type="InterPro" id="IPR005813">
    <property type="entry name" value="Ribosomal_bL20"/>
</dbReference>
<dbReference type="InterPro" id="IPR049946">
    <property type="entry name" value="RIBOSOMAL_L20_CS"/>
</dbReference>
<dbReference type="InterPro" id="IPR035566">
    <property type="entry name" value="Ribosomal_protein_bL20_C"/>
</dbReference>
<dbReference type="NCBIfam" id="TIGR01032">
    <property type="entry name" value="rplT_bact"/>
    <property type="match status" value="1"/>
</dbReference>
<dbReference type="PANTHER" id="PTHR10986">
    <property type="entry name" value="39S RIBOSOMAL PROTEIN L20"/>
    <property type="match status" value="1"/>
</dbReference>
<dbReference type="Pfam" id="PF00453">
    <property type="entry name" value="Ribosomal_L20"/>
    <property type="match status" value="1"/>
</dbReference>
<dbReference type="PRINTS" id="PR00062">
    <property type="entry name" value="RIBOSOMALL20"/>
</dbReference>
<dbReference type="SUPFAM" id="SSF74731">
    <property type="entry name" value="Ribosomal protein L20"/>
    <property type="match status" value="1"/>
</dbReference>
<dbReference type="PROSITE" id="PS00937">
    <property type="entry name" value="RIBOSOMAL_L20"/>
    <property type="match status" value="1"/>
</dbReference>
<keyword id="KW-1185">Reference proteome</keyword>
<keyword id="KW-0687">Ribonucleoprotein</keyword>
<keyword id="KW-0689">Ribosomal protein</keyword>
<keyword id="KW-0694">RNA-binding</keyword>
<keyword id="KW-0699">rRNA-binding</keyword>
<reference key="1">
    <citation type="journal article" date="2004" name="Genome Res.">
        <title>The complete genome and proteome of Mycoplasma mobile.</title>
        <authorList>
            <person name="Jaffe J.D."/>
            <person name="Stange-Thomann N."/>
            <person name="Smith C."/>
            <person name="DeCaprio D."/>
            <person name="Fisher S."/>
            <person name="Butler J."/>
            <person name="Calvo S."/>
            <person name="Elkins T."/>
            <person name="FitzGerald M.G."/>
            <person name="Hafez N."/>
            <person name="Kodira C.D."/>
            <person name="Major J."/>
            <person name="Wang S."/>
            <person name="Wilkinson J."/>
            <person name="Nicol R."/>
            <person name="Nusbaum C."/>
            <person name="Birren B."/>
            <person name="Berg H.C."/>
            <person name="Church G.M."/>
        </authorList>
    </citation>
    <scope>NUCLEOTIDE SEQUENCE [LARGE SCALE GENOMIC DNA]</scope>
    <source>
        <strain>ATCC 43663 / NCTC 11711 / 163 K</strain>
    </source>
</reference>
<comment type="function">
    <text evidence="1">Binds directly to 23S ribosomal RNA and is necessary for the in vitro assembly process of the 50S ribosomal subunit. It is not involved in the protein synthesizing functions of that subunit.</text>
</comment>
<comment type="similarity">
    <text evidence="1">Belongs to the bacterial ribosomal protein bL20 family.</text>
</comment>
<accession>Q6KH18</accession>
<proteinExistence type="inferred from homology"/>
<sequence>MRVKTGPITRKRRKKWLKLAKGYFGHKSIGFKVAKQQVVKSWTYAFRDRKQVKRHFRRLWIARINAATRAQGVSYSLFINGLKKSNIQINRKMLSEIAIHQPKVFDKILTKVKSHLK</sequence>
<feature type="chain" id="PRO_0000177183" description="Large ribosomal subunit protein bL20">
    <location>
        <begin position="1"/>
        <end position="117"/>
    </location>
</feature>
<name>RL20_MYCM1</name>
<organism>
    <name type="scientific">Mycoplasma mobile (strain ATCC 43663 / 163K / NCTC 11711)</name>
    <name type="common">Mesomycoplasma mobile</name>
    <dbReference type="NCBI Taxonomy" id="267748"/>
    <lineage>
        <taxon>Bacteria</taxon>
        <taxon>Bacillati</taxon>
        <taxon>Mycoplasmatota</taxon>
        <taxon>Mycoplasmoidales</taxon>
        <taxon>Metamycoplasmataceae</taxon>
        <taxon>Mesomycoplasma</taxon>
    </lineage>
</organism>